<sequence length="499" mass="62351">MALPTLSAHWPSRVRTLEQQLVRQREQEARLRRQWEQHSQYFREQDVRSSKQAQWSSRQSFHRSMSAFQRDRMREEKQRKLEERRERLRTMLQEERDQLEAELRNIHPDRDTLARQLVEKTDALRSAREERRKNLAQELLREHWKQNNSQLRKVESELHKDHIVSQWQVQQQEKKQADERTQEEKQRFENEYERTRQEALERMRKEEENRKWEEKKRAEELLKQMEELKLREQEAERLKQEQETLMSKRWELEKLEDERKMMEESRRKTEFGRFLTRQYRAQLKRRAQQVQEELEADRKILAALLEGELDEQRFHKARRERAVADAAWMKRVIEEQLQLEREREAEFDILYREEAQRVWEKREAEWEKERRARERLMREVLAGRQQQLQERMQENRLAREESLQRREELLQQLEQDRLTLRLEKEQQEGLRTARIQEIDNQVEQRRKEQWEQQQTLEQEEAQEREELRLQEEELRLETDRMIRQGFQERIHSRPRSAWT</sequence>
<evidence type="ECO:0000250" key="1">
    <source>
        <dbReference type="UniProtKB" id="Q9BT92"/>
    </source>
</evidence>
<evidence type="ECO:0000255" key="2"/>
<evidence type="ECO:0000256" key="3">
    <source>
        <dbReference type="SAM" id="MobiDB-lite"/>
    </source>
</evidence>
<evidence type="ECO:0000305" key="4"/>
<evidence type="ECO:0000312" key="5">
    <source>
        <dbReference type="EMBL" id="AAH95618.1"/>
    </source>
</evidence>
<evidence type="ECO:0000312" key="6">
    <source>
        <dbReference type="EMBL" id="AAI15205.1"/>
    </source>
</evidence>
<evidence type="ECO:0000312" key="7">
    <source>
        <dbReference type="EMBL" id="CAM15569.1"/>
    </source>
</evidence>
<evidence type="ECO:0000312" key="8">
    <source>
        <dbReference type="ZFIN" id="ZDB-GENE-060421-3368"/>
    </source>
</evidence>
<protein>
    <recommendedName>
        <fullName>Trichoplein keratin filament-binding protein</fullName>
        <shortName>Protein TCHP</shortName>
    </recommendedName>
</protein>
<name>TCHP_DANRE</name>
<feature type="chain" id="PRO_0000292612" description="Trichoplein keratin filament-binding protein">
    <location>
        <begin position="1"/>
        <end position="499"/>
    </location>
</feature>
<feature type="region of interest" description="Disordered" evidence="3">
    <location>
        <begin position="46"/>
        <end position="78"/>
    </location>
</feature>
<feature type="region of interest" description="Interaction with keratin proteins" evidence="1">
    <location>
        <begin position="74"/>
        <end position="499"/>
    </location>
</feature>
<feature type="region of interest" description="Disordered" evidence="3">
    <location>
        <begin position="169"/>
        <end position="209"/>
    </location>
</feature>
<feature type="region of interest" description="Trichohyalin/plectin homology domain" evidence="1">
    <location>
        <begin position="260"/>
        <end position="426"/>
    </location>
</feature>
<feature type="coiled-coil region" evidence="2">
    <location>
        <begin position="12"/>
        <end position="38"/>
    </location>
</feature>
<feature type="coiled-coil region" evidence="2">
    <location>
        <begin position="71"/>
        <end position="133"/>
    </location>
</feature>
<feature type="coiled-coil region" evidence="2">
    <location>
        <begin position="168"/>
        <end position="306"/>
    </location>
</feature>
<feature type="coiled-coil region" evidence="2">
    <location>
        <begin position="359"/>
        <end position="484"/>
    </location>
</feature>
<feature type="compositionally biased region" description="Polar residues" evidence="3">
    <location>
        <begin position="50"/>
        <end position="67"/>
    </location>
</feature>
<feature type="compositionally biased region" description="Basic and acidic residues" evidence="3">
    <location>
        <begin position="69"/>
        <end position="78"/>
    </location>
</feature>
<feature type="compositionally biased region" description="Basic and acidic residues" evidence="3">
    <location>
        <begin position="172"/>
        <end position="209"/>
    </location>
</feature>
<feature type="sequence conflict" description="In Ref. 2; AAH95618." evidence="4" ref="2">
    <original>MME</original>
    <variation>ISD</variation>
    <location>
        <begin position="261"/>
        <end position="263"/>
    </location>
</feature>
<organism>
    <name type="scientific">Danio rerio</name>
    <name type="common">Zebrafish</name>
    <name type="synonym">Brachydanio rerio</name>
    <dbReference type="NCBI Taxonomy" id="7955"/>
    <lineage>
        <taxon>Eukaryota</taxon>
        <taxon>Metazoa</taxon>
        <taxon>Chordata</taxon>
        <taxon>Craniata</taxon>
        <taxon>Vertebrata</taxon>
        <taxon>Euteleostomi</taxon>
        <taxon>Actinopterygii</taxon>
        <taxon>Neopterygii</taxon>
        <taxon>Teleostei</taxon>
        <taxon>Ostariophysi</taxon>
        <taxon>Cypriniformes</taxon>
        <taxon>Danionidae</taxon>
        <taxon>Danioninae</taxon>
        <taxon>Danio</taxon>
    </lineage>
</organism>
<dbReference type="EMBL" id="BX323811">
    <property type="protein sequence ID" value="CAM15569.1"/>
    <property type="molecule type" value="Genomic_DNA"/>
</dbReference>
<dbReference type="EMBL" id="BC095618">
    <property type="protein sequence ID" value="AAH95618.1"/>
    <property type="status" value="ALT_SEQ"/>
    <property type="molecule type" value="mRNA"/>
</dbReference>
<dbReference type="EMBL" id="BC115204">
    <property type="protein sequence ID" value="AAI15205.1"/>
    <property type="molecule type" value="mRNA"/>
</dbReference>
<dbReference type="RefSeq" id="NP_001035433.1">
    <property type="nucleotide sequence ID" value="NM_001040343.1"/>
</dbReference>
<dbReference type="SMR" id="Q1RM03"/>
<dbReference type="FunCoup" id="Q1RM03">
    <property type="interactions" value="1531"/>
</dbReference>
<dbReference type="STRING" id="7955.ENSDARP00000051613"/>
<dbReference type="PaxDb" id="7955-ENSDARP00000051613"/>
<dbReference type="Ensembl" id="ENSDART00000051614">
    <property type="protein sequence ID" value="ENSDARP00000051613"/>
    <property type="gene ID" value="ENSDARG00000035605"/>
</dbReference>
<dbReference type="GeneID" id="678595"/>
<dbReference type="KEGG" id="dre:678595"/>
<dbReference type="AGR" id="ZFIN:ZDB-GENE-060421-3368"/>
<dbReference type="CTD" id="84260"/>
<dbReference type="ZFIN" id="ZDB-GENE-060421-3368">
    <property type="gene designation" value="tchp"/>
</dbReference>
<dbReference type="eggNOG" id="ENOG502QVSH">
    <property type="taxonomic scope" value="Eukaryota"/>
</dbReference>
<dbReference type="HOGENOM" id="CLU_042533_1_0_1"/>
<dbReference type="InParanoid" id="Q1RM03"/>
<dbReference type="OMA" id="QNSHYFR"/>
<dbReference type="OrthoDB" id="6431598at2759"/>
<dbReference type="PhylomeDB" id="Q1RM03"/>
<dbReference type="TreeFam" id="TF329032"/>
<dbReference type="PRO" id="PR:Q1RM03"/>
<dbReference type="Proteomes" id="UP000000437">
    <property type="component" value="Chromosome 5"/>
</dbReference>
<dbReference type="Bgee" id="ENSDARG00000035605">
    <property type="expression patterns" value="Expressed in testis and 20 other cell types or tissues"/>
</dbReference>
<dbReference type="GO" id="GO:0005813">
    <property type="term" value="C:centrosome"/>
    <property type="evidence" value="ECO:0000250"/>
    <property type="project" value="UniProtKB"/>
</dbReference>
<dbReference type="GO" id="GO:0005737">
    <property type="term" value="C:cytoplasm"/>
    <property type="evidence" value="ECO:0007669"/>
    <property type="project" value="UniProtKB-KW"/>
</dbReference>
<dbReference type="GO" id="GO:0045095">
    <property type="term" value="C:keratin filament"/>
    <property type="evidence" value="ECO:0000318"/>
    <property type="project" value="GO_Central"/>
</dbReference>
<dbReference type="GO" id="GO:0006915">
    <property type="term" value="P:apoptotic process"/>
    <property type="evidence" value="ECO:0000318"/>
    <property type="project" value="GO_Central"/>
</dbReference>
<dbReference type="InterPro" id="IPR043596">
    <property type="entry name" value="CFAP53/TCHP"/>
</dbReference>
<dbReference type="InterPro" id="IPR043597">
    <property type="entry name" value="TPH_dom"/>
</dbReference>
<dbReference type="PANTHER" id="PTHR31183:SF2">
    <property type="entry name" value="TRICHOPLEIN KERATIN FILAMENT-BINDING PROTEIN"/>
    <property type="match status" value="1"/>
</dbReference>
<dbReference type="PANTHER" id="PTHR31183">
    <property type="entry name" value="TRICHOPLEIN KERATIN FILAMENT-BINDING PROTEIN FAMILY MEMBER"/>
    <property type="match status" value="1"/>
</dbReference>
<dbReference type="Pfam" id="PF13868">
    <property type="entry name" value="TPH"/>
    <property type="match status" value="1"/>
</dbReference>
<keyword id="KW-0175">Coiled coil</keyword>
<keyword id="KW-0963">Cytoplasm</keyword>
<keyword id="KW-0206">Cytoskeleton</keyword>
<keyword id="KW-1185">Reference proteome</keyword>
<gene>
    <name evidence="6 8" type="primary">tchp</name>
    <name type="ORF">zgc:136634</name>
</gene>
<reference key="1">
    <citation type="journal article" date="2013" name="Nature">
        <title>The zebrafish reference genome sequence and its relationship to the human genome.</title>
        <authorList>
            <person name="Howe K."/>
            <person name="Clark M.D."/>
            <person name="Torroja C.F."/>
            <person name="Torrance J."/>
            <person name="Berthelot C."/>
            <person name="Muffato M."/>
            <person name="Collins J.E."/>
            <person name="Humphray S."/>
            <person name="McLaren K."/>
            <person name="Matthews L."/>
            <person name="McLaren S."/>
            <person name="Sealy I."/>
            <person name="Caccamo M."/>
            <person name="Churcher C."/>
            <person name="Scott C."/>
            <person name="Barrett J.C."/>
            <person name="Koch R."/>
            <person name="Rauch G.J."/>
            <person name="White S."/>
            <person name="Chow W."/>
            <person name="Kilian B."/>
            <person name="Quintais L.T."/>
            <person name="Guerra-Assuncao J.A."/>
            <person name="Zhou Y."/>
            <person name="Gu Y."/>
            <person name="Yen J."/>
            <person name="Vogel J.H."/>
            <person name="Eyre T."/>
            <person name="Redmond S."/>
            <person name="Banerjee R."/>
            <person name="Chi J."/>
            <person name="Fu B."/>
            <person name="Langley E."/>
            <person name="Maguire S.F."/>
            <person name="Laird G.K."/>
            <person name="Lloyd D."/>
            <person name="Kenyon E."/>
            <person name="Donaldson S."/>
            <person name="Sehra H."/>
            <person name="Almeida-King J."/>
            <person name="Loveland J."/>
            <person name="Trevanion S."/>
            <person name="Jones M."/>
            <person name="Quail M."/>
            <person name="Willey D."/>
            <person name="Hunt A."/>
            <person name="Burton J."/>
            <person name="Sims S."/>
            <person name="McLay K."/>
            <person name="Plumb B."/>
            <person name="Davis J."/>
            <person name="Clee C."/>
            <person name="Oliver K."/>
            <person name="Clark R."/>
            <person name="Riddle C."/>
            <person name="Elliot D."/>
            <person name="Threadgold G."/>
            <person name="Harden G."/>
            <person name="Ware D."/>
            <person name="Begum S."/>
            <person name="Mortimore B."/>
            <person name="Kerry G."/>
            <person name="Heath P."/>
            <person name="Phillimore B."/>
            <person name="Tracey A."/>
            <person name="Corby N."/>
            <person name="Dunn M."/>
            <person name="Johnson C."/>
            <person name="Wood J."/>
            <person name="Clark S."/>
            <person name="Pelan S."/>
            <person name="Griffiths G."/>
            <person name="Smith M."/>
            <person name="Glithero R."/>
            <person name="Howden P."/>
            <person name="Barker N."/>
            <person name="Lloyd C."/>
            <person name="Stevens C."/>
            <person name="Harley J."/>
            <person name="Holt K."/>
            <person name="Panagiotidis G."/>
            <person name="Lovell J."/>
            <person name="Beasley H."/>
            <person name="Henderson C."/>
            <person name="Gordon D."/>
            <person name="Auger K."/>
            <person name="Wright D."/>
            <person name="Collins J."/>
            <person name="Raisen C."/>
            <person name="Dyer L."/>
            <person name="Leung K."/>
            <person name="Robertson L."/>
            <person name="Ambridge K."/>
            <person name="Leongamornlert D."/>
            <person name="McGuire S."/>
            <person name="Gilderthorp R."/>
            <person name="Griffiths C."/>
            <person name="Manthravadi D."/>
            <person name="Nichol S."/>
            <person name="Barker G."/>
            <person name="Whitehead S."/>
            <person name="Kay M."/>
            <person name="Brown J."/>
            <person name="Murnane C."/>
            <person name="Gray E."/>
            <person name="Humphries M."/>
            <person name="Sycamore N."/>
            <person name="Barker D."/>
            <person name="Saunders D."/>
            <person name="Wallis J."/>
            <person name="Babbage A."/>
            <person name="Hammond S."/>
            <person name="Mashreghi-Mohammadi M."/>
            <person name="Barr L."/>
            <person name="Martin S."/>
            <person name="Wray P."/>
            <person name="Ellington A."/>
            <person name="Matthews N."/>
            <person name="Ellwood M."/>
            <person name="Woodmansey R."/>
            <person name="Clark G."/>
            <person name="Cooper J."/>
            <person name="Tromans A."/>
            <person name="Grafham D."/>
            <person name="Skuce C."/>
            <person name="Pandian R."/>
            <person name="Andrews R."/>
            <person name="Harrison E."/>
            <person name="Kimberley A."/>
            <person name="Garnett J."/>
            <person name="Fosker N."/>
            <person name="Hall R."/>
            <person name="Garner P."/>
            <person name="Kelly D."/>
            <person name="Bird C."/>
            <person name="Palmer S."/>
            <person name="Gehring I."/>
            <person name="Berger A."/>
            <person name="Dooley C.M."/>
            <person name="Ersan-Urun Z."/>
            <person name="Eser C."/>
            <person name="Geiger H."/>
            <person name="Geisler M."/>
            <person name="Karotki L."/>
            <person name="Kirn A."/>
            <person name="Konantz J."/>
            <person name="Konantz M."/>
            <person name="Oberlander M."/>
            <person name="Rudolph-Geiger S."/>
            <person name="Teucke M."/>
            <person name="Lanz C."/>
            <person name="Raddatz G."/>
            <person name="Osoegawa K."/>
            <person name="Zhu B."/>
            <person name="Rapp A."/>
            <person name="Widaa S."/>
            <person name="Langford C."/>
            <person name="Yang F."/>
            <person name="Schuster S.C."/>
            <person name="Carter N.P."/>
            <person name="Harrow J."/>
            <person name="Ning Z."/>
            <person name="Herrero J."/>
            <person name="Searle S.M."/>
            <person name="Enright A."/>
            <person name="Geisler R."/>
            <person name="Plasterk R.H."/>
            <person name="Lee C."/>
            <person name="Westerfield M."/>
            <person name="de Jong P.J."/>
            <person name="Zon L.I."/>
            <person name="Postlethwait J.H."/>
            <person name="Nusslein-Volhard C."/>
            <person name="Hubbard T.J."/>
            <person name="Roest Crollius H."/>
            <person name="Rogers J."/>
            <person name="Stemple D.L."/>
        </authorList>
    </citation>
    <scope>NUCLEOTIDE SEQUENCE [LARGE SCALE GENOMIC DNA]</scope>
    <source>
        <strain>Tuebingen</strain>
    </source>
</reference>
<reference evidence="7" key="2">
    <citation type="submission" date="2006-04" db="EMBL/GenBank/DDBJ databases">
        <authorList>
            <consortium name="NIH - Zebrafish Gene Collection (ZGC) project"/>
        </authorList>
    </citation>
    <scope>NUCLEOTIDE SEQUENCE [LARGE SCALE MRNA]</scope>
    <source>
        <tissue evidence="5">Larva</tissue>
    </source>
</reference>
<proteinExistence type="evidence at transcript level"/>
<accession>Q1RM03</accession>
<accession>Q502P3</accession>
<comment type="function">
    <text evidence="1">May act as a 'capping' or 'branching' protein for keratin filaments in the cell periphery. May regulate K8/K18 filament and desmosome organization mainly at the apical or peripheral regions of simple epithelial cells (By similarity).</text>
</comment>
<comment type="subcellular location">
    <subcellularLocation>
        <location evidence="1">Cytoplasm</location>
        <location evidence="1">Cytoskeleton</location>
    </subcellularLocation>
    <subcellularLocation>
        <location evidence="1">Cytoplasm</location>
        <location evidence="1">Cytoskeleton</location>
        <location evidence="1">Microtubule organizing center</location>
        <location evidence="1">Centrosome</location>
    </subcellularLocation>
</comment>
<comment type="similarity">
    <text evidence="4">Belongs to the TCHP family.</text>
</comment>
<comment type="sequence caution" evidence="4">
    <conflict type="miscellaneous discrepancy">
        <sequence resource="EMBL-CDS" id="AAH95618"/>
    </conflict>
    <text>Contaminating sequence. Potential poly-A sequence starting in position 264.</text>
</comment>